<gene>
    <name evidence="2" type="primary">Znf654</name>
    <name type="synonym">Zfp654</name>
</gene>
<accession>Q9DAU9</accession>
<accession>A0A140LI34</accession>
<accession>Q8K390</accession>
<reference key="1">
    <citation type="journal article" date="2009" name="PLoS Biol.">
        <title>Lineage-specific biology revealed by a finished genome assembly of the mouse.</title>
        <authorList>
            <person name="Church D.M."/>
            <person name="Goodstadt L."/>
            <person name="Hillier L.W."/>
            <person name="Zody M.C."/>
            <person name="Goldstein S."/>
            <person name="She X."/>
            <person name="Bult C.J."/>
            <person name="Agarwala R."/>
            <person name="Cherry J.L."/>
            <person name="DiCuccio M."/>
            <person name="Hlavina W."/>
            <person name="Kapustin Y."/>
            <person name="Meric P."/>
            <person name="Maglott D."/>
            <person name="Birtle Z."/>
            <person name="Marques A.C."/>
            <person name="Graves T."/>
            <person name="Zhou S."/>
            <person name="Teague B."/>
            <person name="Potamousis K."/>
            <person name="Churas C."/>
            <person name="Place M."/>
            <person name="Herschleb J."/>
            <person name="Runnheim R."/>
            <person name="Forrest D."/>
            <person name="Amos-Landgraf J."/>
            <person name="Schwartz D.C."/>
            <person name="Cheng Z."/>
            <person name="Lindblad-Toh K."/>
            <person name="Eichler E.E."/>
            <person name="Ponting C.P."/>
        </authorList>
    </citation>
    <scope>NUCLEOTIDE SEQUENCE [LARGE SCALE GENOMIC DNA]</scope>
    <source>
        <strain>C57BL/6J</strain>
    </source>
</reference>
<reference key="2">
    <citation type="journal article" date="2004" name="Genome Res.">
        <title>The status, quality, and expansion of the NIH full-length cDNA project: the Mammalian Gene Collection (MGC).</title>
        <authorList>
            <consortium name="The MGC Project Team"/>
        </authorList>
    </citation>
    <scope>NUCLEOTIDE SEQUENCE [LARGE SCALE MRNA] OF 610-1112</scope>
    <source>
        <strain>FVB/N</strain>
        <tissue>Embryo</tissue>
        <tissue>Mammary tumor</tissue>
    </source>
</reference>
<reference key="3">
    <citation type="journal article" date="2005" name="Science">
        <title>The transcriptional landscape of the mammalian genome.</title>
        <authorList>
            <person name="Carninci P."/>
            <person name="Kasukawa T."/>
            <person name="Katayama S."/>
            <person name="Gough J."/>
            <person name="Frith M.C."/>
            <person name="Maeda N."/>
            <person name="Oyama R."/>
            <person name="Ravasi T."/>
            <person name="Lenhard B."/>
            <person name="Wells C."/>
            <person name="Kodzius R."/>
            <person name="Shimokawa K."/>
            <person name="Bajic V.B."/>
            <person name="Brenner S.E."/>
            <person name="Batalov S."/>
            <person name="Forrest A.R."/>
            <person name="Zavolan M."/>
            <person name="Davis M.J."/>
            <person name="Wilming L.G."/>
            <person name="Aidinis V."/>
            <person name="Allen J.E."/>
            <person name="Ambesi-Impiombato A."/>
            <person name="Apweiler R."/>
            <person name="Aturaliya R.N."/>
            <person name="Bailey T.L."/>
            <person name="Bansal M."/>
            <person name="Baxter L."/>
            <person name="Beisel K.W."/>
            <person name="Bersano T."/>
            <person name="Bono H."/>
            <person name="Chalk A.M."/>
            <person name="Chiu K.P."/>
            <person name="Choudhary V."/>
            <person name="Christoffels A."/>
            <person name="Clutterbuck D.R."/>
            <person name="Crowe M.L."/>
            <person name="Dalla E."/>
            <person name="Dalrymple B.P."/>
            <person name="de Bono B."/>
            <person name="Della Gatta G."/>
            <person name="di Bernardo D."/>
            <person name="Down T."/>
            <person name="Engstrom P."/>
            <person name="Fagiolini M."/>
            <person name="Faulkner G."/>
            <person name="Fletcher C.F."/>
            <person name="Fukushima T."/>
            <person name="Furuno M."/>
            <person name="Futaki S."/>
            <person name="Gariboldi M."/>
            <person name="Georgii-Hemming P."/>
            <person name="Gingeras T.R."/>
            <person name="Gojobori T."/>
            <person name="Green R.E."/>
            <person name="Gustincich S."/>
            <person name="Harbers M."/>
            <person name="Hayashi Y."/>
            <person name="Hensch T.K."/>
            <person name="Hirokawa N."/>
            <person name="Hill D."/>
            <person name="Huminiecki L."/>
            <person name="Iacono M."/>
            <person name="Ikeo K."/>
            <person name="Iwama A."/>
            <person name="Ishikawa T."/>
            <person name="Jakt M."/>
            <person name="Kanapin A."/>
            <person name="Katoh M."/>
            <person name="Kawasawa Y."/>
            <person name="Kelso J."/>
            <person name="Kitamura H."/>
            <person name="Kitano H."/>
            <person name="Kollias G."/>
            <person name="Krishnan S.P."/>
            <person name="Kruger A."/>
            <person name="Kummerfeld S.K."/>
            <person name="Kurochkin I.V."/>
            <person name="Lareau L.F."/>
            <person name="Lazarevic D."/>
            <person name="Lipovich L."/>
            <person name="Liu J."/>
            <person name="Liuni S."/>
            <person name="McWilliam S."/>
            <person name="Madan Babu M."/>
            <person name="Madera M."/>
            <person name="Marchionni L."/>
            <person name="Matsuda H."/>
            <person name="Matsuzawa S."/>
            <person name="Miki H."/>
            <person name="Mignone F."/>
            <person name="Miyake S."/>
            <person name="Morris K."/>
            <person name="Mottagui-Tabar S."/>
            <person name="Mulder N."/>
            <person name="Nakano N."/>
            <person name="Nakauchi H."/>
            <person name="Ng P."/>
            <person name="Nilsson R."/>
            <person name="Nishiguchi S."/>
            <person name="Nishikawa S."/>
            <person name="Nori F."/>
            <person name="Ohara O."/>
            <person name="Okazaki Y."/>
            <person name="Orlando V."/>
            <person name="Pang K.C."/>
            <person name="Pavan W.J."/>
            <person name="Pavesi G."/>
            <person name="Pesole G."/>
            <person name="Petrovsky N."/>
            <person name="Piazza S."/>
            <person name="Reed J."/>
            <person name="Reid J.F."/>
            <person name="Ring B.Z."/>
            <person name="Ringwald M."/>
            <person name="Rost B."/>
            <person name="Ruan Y."/>
            <person name="Salzberg S.L."/>
            <person name="Sandelin A."/>
            <person name="Schneider C."/>
            <person name="Schoenbach C."/>
            <person name="Sekiguchi K."/>
            <person name="Semple C.A."/>
            <person name="Seno S."/>
            <person name="Sessa L."/>
            <person name="Sheng Y."/>
            <person name="Shibata Y."/>
            <person name="Shimada H."/>
            <person name="Shimada K."/>
            <person name="Silva D."/>
            <person name="Sinclair B."/>
            <person name="Sperling S."/>
            <person name="Stupka E."/>
            <person name="Sugiura K."/>
            <person name="Sultana R."/>
            <person name="Takenaka Y."/>
            <person name="Taki K."/>
            <person name="Tammoja K."/>
            <person name="Tan S.L."/>
            <person name="Tang S."/>
            <person name="Taylor M.S."/>
            <person name="Tegner J."/>
            <person name="Teichmann S.A."/>
            <person name="Ueda H.R."/>
            <person name="van Nimwegen E."/>
            <person name="Verardo R."/>
            <person name="Wei C.L."/>
            <person name="Yagi K."/>
            <person name="Yamanishi H."/>
            <person name="Zabarovsky E."/>
            <person name="Zhu S."/>
            <person name="Zimmer A."/>
            <person name="Hide W."/>
            <person name="Bult C."/>
            <person name="Grimmond S.M."/>
            <person name="Teasdale R.D."/>
            <person name="Liu E.T."/>
            <person name="Brusic V."/>
            <person name="Quackenbush J."/>
            <person name="Wahlestedt C."/>
            <person name="Mattick J.S."/>
            <person name="Hume D.A."/>
            <person name="Kai C."/>
            <person name="Sasaki D."/>
            <person name="Tomaru Y."/>
            <person name="Fukuda S."/>
            <person name="Kanamori-Katayama M."/>
            <person name="Suzuki M."/>
            <person name="Aoki J."/>
            <person name="Arakawa T."/>
            <person name="Iida J."/>
            <person name="Imamura K."/>
            <person name="Itoh M."/>
            <person name="Kato T."/>
            <person name="Kawaji H."/>
            <person name="Kawagashira N."/>
            <person name="Kawashima T."/>
            <person name="Kojima M."/>
            <person name="Kondo S."/>
            <person name="Konno H."/>
            <person name="Nakano K."/>
            <person name="Ninomiya N."/>
            <person name="Nishio T."/>
            <person name="Okada M."/>
            <person name="Plessy C."/>
            <person name="Shibata K."/>
            <person name="Shiraki T."/>
            <person name="Suzuki S."/>
            <person name="Tagami M."/>
            <person name="Waki K."/>
            <person name="Watahiki A."/>
            <person name="Okamura-Oho Y."/>
            <person name="Suzuki H."/>
            <person name="Kawai J."/>
            <person name="Hayashizaki Y."/>
        </authorList>
    </citation>
    <scope>NUCLEOTIDE SEQUENCE [LARGE SCALE MRNA] OF 489-1112</scope>
    <source>
        <strain>C57BL/6J</strain>
        <tissue>Placenta</tissue>
    </source>
</reference>
<reference key="4">
    <citation type="journal article" date="2007" name="Proc. Natl. Acad. Sci. U.S.A.">
        <title>Large-scale phosphorylation analysis of mouse liver.</title>
        <authorList>
            <person name="Villen J."/>
            <person name="Beausoleil S.A."/>
            <person name="Gerber S.A."/>
            <person name="Gygi S.P."/>
        </authorList>
    </citation>
    <scope>PHOSPHORYLATION [LARGE SCALE ANALYSIS] AT SER-1107 AND SER-1111</scope>
    <scope>IDENTIFICATION BY MASS SPECTROMETRY [LARGE SCALE ANALYSIS]</scope>
    <source>
        <tissue>Liver</tissue>
    </source>
</reference>
<reference key="5">
    <citation type="journal article" date="2010" name="Cell">
        <title>A tissue-specific atlas of mouse protein phosphorylation and expression.</title>
        <authorList>
            <person name="Huttlin E.L."/>
            <person name="Jedrychowski M.P."/>
            <person name="Elias J.E."/>
            <person name="Goswami T."/>
            <person name="Rad R."/>
            <person name="Beausoleil S.A."/>
            <person name="Villen J."/>
            <person name="Haas W."/>
            <person name="Sowa M.E."/>
            <person name="Gygi S.P."/>
        </authorList>
    </citation>
    <scope>PHOSPHORYLATION [LARGE SCALE ANALYSIS] AT SER-1107 AND SER-1111</scope>
    <scope>IDENTIFICATION BY MASS SPECTROMETRY [LARGE SCALE ANALYSIS]</scope>
    <source>
        <tissue>Spleen</tissue>
        <tissue>Testis</tissue>
    </source>
</reference>
<organism>
    <name type="scientific">Mus musculus</name>
    <name type="common">Mouse</name>
    <dbReference type="NCBI Taxonomy" id="10090"/>
    <lineage>
        <taxon>Eukaryota</taxon>
        <taxon>Metazoa</taxon>
        <taxon>Chordata</taxon>
        <taxon>Craniata</taxon>
        <taxon>Vertebrata</taxon>
        <taxon>Euteleostomi</taxon>
        <taxon>Mammalia</taxon>
        <taxon>Eutheria</taxon>
        <taxon>Euarchontoglires</taxon>
        <taxon>Glires</taxon>
        <taxon>Rodentia</taxon>
        <taxon>Myomorpha</taxon>
        <taxon>Muroidea</taxon>
        <taxon>Muridae</taxon>
        <taxon>Murinae</taxon>
        <taxon>Mus</taxon>
        <taxon>Mus</taxon>
    </lineage>
</organism>
<keyword id="KW-0238">DNA-binding</keyword>
<keyword id="KW-0479">Metal-binding</keyword>
<keyword id="KW-0539">Nucleus</keyword>
<keyword id="KW-0597">Phosphoprotein</keyword>
<keyword id="KW-1185">Reference proteome</keyword>
<keyword id="KW-0677">Repeat</keyword>
<keyword id="KW-0804">Transcription</keyword>
<keyword id="KW-0805">Transcription regulation</keyword>
<keyword id="KW-0862">Zinc</keyword>
<keyword id="KW-0863">Zinc-finger</keyword>
<name>ZN654_MOUSE</name>
<proteinExistence type="evidence at protein level"/>
<dbReference type="EMBL" id="CT030641">
    <property type="status" value="NOT_ANNOTATED_CDS"/>
    <property type="molecule type" value="Genomic_DNA"/>
</dbReference>
<dbReference type="EMBL" id="BC027760">
    <property type="protein sequence ID" value="AAH27760.1"/>
    <property type="status" value="ALT_INIT"/>
    <property type="molecule type" value="mRNA"/>
</dbReference>
<dbReference type="EMBL" id="BC068018">
    <property type="protein sequence ID" value="AAH68018.1"/>
    <property type="status" value="ALT_INIT"/>
    <property type="molecule type" value="mRNA"/>
</dbReference>
<dbReference type="EMBL" id="AK005508">
    <property type="protein sequence ID" value="BAB24088.2"/>
    <property type="status" value="ALT_INIT"/>
    <property type="molecule type" value="mRNA"/>
</dbReference>
<dbReference type="CCDS" id="CCDS84250.1"/>
<dbReference type="RefSeq" id="NP_001334174.1">
    <property type="nucleotide sequence ID" value="NM_001347245.1"/>
</dbReference>
<dbReference type="RefSeq" id="NP_082335.1">
    <property type="nucleotide sequence ID" value="NM_028059.2"/>
</dbReference>
<dbReference type="FunCoup" id="Q9DAU9">
    <property type="interactions" value="1873"/>
</dbReference>
<dbReference type="STRING" id="10090.ENSMUSP00000146656"/>
<dbReference type="iPTMnet" id="Q9DAU9"/>
<dbReference type="PhosphoSitePlus" id="Q9DAU9"/>
<dbReference type="SwissPalm" id="Q9DAU9"/>
<dbReference type="jPOST" id="Q9DAU9"/>
<dbReference type="PaxDb" id="10090-ENSMUSP00000052946"/>
<dbReference type="PeptideAtlas" id="Q9DAU9"/>
<dbReference type="ProteomicsDB" id="299594"/>
<dbReference type="ProteomicsDB" id="314788"/>
<dbReference type="Antibodypedia" id="32053">
    <property type="antibodies" value="123 antibodies from 22 providers"/>
</dbReference>
<dbReference type="DNASU" id="72020"/>
<dbReference type="Ensembl" id="ENSMUST00000207826.2">
    <property type="protein sequence ID" value="ENSMUSP00000146656.2"/>
    <property type="gene ID" value="ENSMUSG00000047141.6"/>
</dbReference>
<dbReference type="GeneID" id="72020"/>
<dbReference type="KEGG" id="mmu:72020"/>
<dbReference type="UCSC" id="uc007zqd.1">
    <property type="organism name" value="mouse"/>
</dbReference>
<dbReference type="AGR" id="MGI:1919270"/>
<dbReference type="CTD" id="72020"/>
<dbReference type="MGI" id="MGI:1919270">
    <property type="gene designation" value="Zfp654"/>
</dbReference>
<dbReference type="VEuPathDB" id="HostDB:ENSMUSG00000047141"/>
<dbReference type="eggNOG" id="KOG1721">
    <property type="taxonomic scope" value="Eukaryota"/>
</dbReference>
<dbReference type="GeneTree" id="ENSGT00950000183034"/>
<dbReference type="HOGENOM" id="CLU_026570_1_0_1"/>
<dbReference type="InParanoid" id="Q9DAU9"/>
<dbReference type="OMA" id="VDQCYHL"/>
<dbReference type="OrthoDB" id="10029602at2759"/>
<dbReference type="PhylomeDB" id="Q9DAU9"/>
<dbReference type="TreeFam" id="TF326007"/>
<dbReference type="BioGRID-ORCS" id="72020">
    <property type="hits" value="3 hits in 76 CRISPR screens"/>
</dbReference>
<dbReference type="ChiTaRS" id="Zfp654">
    <property type="organism name" value="mouse"/>
</dbReference>
<dbReference type="PRO" id="PR:Q9DAU9"/>
<dbReference type="Proteomes" id="UP000000589">
    <property type="component" value="Chromosome 16"/>
</dbReference>
<dbReference type="RNAct" id="Q9DAU9">
    <property type="molecule type" value="protein"/>
</dbReference>
<dbReference type="Bgee" id="ENSMUSG00000047141">
    <property type="expression patterns" value="Expressed in spermatid and 247 other cell types or tissues"/>
</dbReference>
<dbReference type="ExpressionAtlas" id="Q9DAU9">
    <property type="expression patterns" value="baseline and differential"/>
</dbReference>
<dbReference type="GO" id="GO:0005634">
    <property type="term" value="C:nucleus"/>
    <property type="evidence" value="ECO:0007669"/>
    <property type="project" value="UniProtKB-SubCell"/>
</dbReference>
<dbReference type="GO" id="GO:0003677">
    <property type="term" value="F:DNA binding"/>
    <property type="evidence" value="ECO:0007669"/>
    <property type="project" value="UniProtKB-KW"/>
</dbReference>
<dbReference type="GO" id="GO:0008270">
    <property type="term" value="F:zinc ion binding"/>
    <property type="evidence" value="ECO:0007669"/>
    <property type="project" value="UniProtKB-KW"/>
</dbReference>
<dbReference type="Gene3D" id="3.30.160.60">
    <property type="entry name" value="Classic Zinc Finger"/>
    <property type="match status" value="2"/>
</dbReference>
<dbReference type="InterPro" id="IPR052251">
    <property type="entry name" value="GH-ZnFinger_Regulators"/>
</dbReference>
<dbReference type="InterPro" id="IPR036236">
    <property type="entry name" value="Znf_C2H2_sf"/>
</dbReference>
<dbReference type="InterPro" id="IPR013087">
    <property type="entry name" value="Znf_C2H2_type"/>
</dbReference>
<dbReference type="PANTHER" id="PTHR15507:SF16">
    <property type="entry name" value="ZINC FINGER PROTEIN 654"/>
    <property type="match status" value="1"/>
</dbReference>
<dbReference type="PANTHER" id="PTHR15507">
    <property type="entry name" value="ZINC FINGER PROTEIN RLF"/>
    <property type="match status" value="1"/>
</dbReference>
<dbReference type="Pfam" id="PF00096">
    <property type="entry name" value="zf-C2H2"/>
    <property type="match status" value="1"/>
</dbReference>
<dbReference type="Pfam" id="PF25420">
    <property type="entry name" value="zf-C2H2_ZN292"/>
    <property type="match status" value="1"/>
</dbReference>
<dbReference type="SMART" id="SM00355">
    <property type="entry name" value="ZnF_C2H2"/>
    <property type="match status" value="7"/>
</dbReference>
<dbReference type="SUPFAM" id="SSF57667">
    <property type="entry name" value="beta-beta-alpha zinc fingers"/>
    <property type="match status" value="1"/>
</dbReference>
<dbReference type="PROSITE" id="PS00028">
    <property type="entry name" value="ZINC_FINGER_C2H2_1"/>
    <property type="match status" value="5"/>
</dbReference>
<dbReference type="PROSITE" id="PS50157">
    <property type="entry name" value="ZINC_FINGER_C2H2_2"/>
    <property type="match status" value="3"/>
</dbReference>
<protein>
    <recommendedName>
        <fullName evidence="5">Zinc finger protein 654</fullName>
    </recommendedName>
</protein>
<evidence type="ECO:0000250" key="1"/>
<evidence type="ECO:0000250" key="2">
    <source>
        <dbReference type="UniProtKB" id="Q8IZM8"/>
    </source>
</evidence>
<evidence type="ECO:0000255" key="3">
    <source>
        <dbReference type="PROSITE-ProRule" id="PRU00042"/>
    </source>
</evidence>
<evidence type="ECO:0000256" key="4">
    <source>
        <dbReference type="SAM" id="MobiDB-lite"/>
    </source>
</evidence>
<evidence type="ECO:0000305" key="5"/>
<evidence type="ECO:0007744" key="6">
    <source>
    </source>
</evidence>
<evidence type="ECO:0007744" key="7">
    <source>
    </source>
</evidence>
<sequence>MAEEESDQEAERLGEELVAIVESPPGPVGLLAAGDGRGGAGGGGCGGGVGISSRDYCRRFCQVVEDYAGRWQVPLPQLQVLQTALCCFTSASASFPDECEHVQYVLSSLAVSFFELLLFFGRDEFYEEPLKDILGSFQECQNHLRRYGNVNLELVTRIIKDGGPWEDPVLQAVLKAQPASQEIVNKYLSSENPLFFELRARYLIACERIPEAMALIKSCINHPEISKDLYFHQALFTCLFMSPVEDQLFREHLLKTDCKSGIDIICNTEKEGKTLLALQLCESFLIPQLQNGDMYYIWELIFLWSKLQLKSNPSKQVFVDQCYQLLRTATNVRVIFPFMKIIKDEVEEEGLQICVEICGCALQLDLHDDPETKCLIYKTIAHFLPNDLEIVRVCALSVFFLERSLDAYHTVEELYRRPDEEYSEGMSTVQNRVRFELLPILKKGLFFDPEFWNFVMIKKNCVALLRDKSAVKLLNENTLENPSSSLKKRVDQQSVEEDQSTGETDPDDASVVQPKGQVNVKRSLSALNTSKVDHSVPRHRCMLCNKEFLGGHIVRHAQAHQKKGSFACVICGRKFRNRGLMQKHLKNHVKKIQRQQIATAQQDDPEVITLEEINGSKSLISFENGNSNTKGLEIETLTASSERNKEVIREHMAEFIKIPIAIPENAIENIIENGKPDASFNNISESLPQCDDDYEEEENEDDYEDDYDLNQETSVLHKINGTVCHPKDVYATDQEGNFKCPALGCVRIFKRIGFLNMHARTVHPTDLNVRQTVMKWSKGKCKFCQRQFEDSQHFIDHLNRHSYPNVYFCLHFNCNESFKLPFQLAQHTKSHRIFQAQCSFPECHELFEDLPLLYEHEAQHYLSKTPESSAQLSEVVPNHQEIDPFSNENQTIHHPVSTSKSRKYSTEPKTYIDTMEKKTDSLVHNGNEHSDDTVSNISLIDQKMPAIEPNPENTHSTTDLVNGHSEIEQTPLVTSDPTLKIDINRNRTENGSILPSVESQEHSALSVSQAPSKPNLTSEQTSYGLIVTKPFVRPLPPSYLDERYLSMPKRRKFLTDIVDACSDQDNMYKKPVKRLRCGKCLTTYCNAEALEAHLAQKKCQTLFGFDSDDESA</sequence>
<feature type="chain" id="PRO_0000311947" description="Zinc finger protein 654">
    <location>
        <begin position="1"/>
        <end position="1112"/>
    </location>
</feature>
<feature type="zinc finger region" description="C2H2-type 1" evidence="3">
    <location>
        <begin position="566"/>
        <end position="588"/>
    </location>
</feature>
<feature type="zinc finger region" description="C2H2-type 2" evidence="3">
    <location>
        <begin position="738"/>
        <end position="763"/>
    </location>
</feature>
<feature type="zinc finger region" description="C2H2-type 3" evidence="3">
    <location>
        <begin position="779"/>
        <end position="801"/>
    </location>
</feature>
<feature type="zinc finger region" description="C2H2-type 4" evidence="3">
    <location>
        <begin position="807"/>
        <end position="831"/>
    </location>
</feature>
<feature type="zinc finger region" description="C2H2-type 5" evidence="3">
    <location>
        <begin position="836"/>
        <end position="860"/>
    </location>
</feature>
<feature type="region of interest" description="Disordered" evidence="4">
    <location>
        <begin position="482"/>
        <end position="514"/>
    </location>
</feature>
<feature type="region of interest" description="Disordered" evidence="4">
    <location>
        <begin position="885"/>
        <end position="906"/>
    </location>
</feature>
<feature type="region of interest" description="Disordered" evidence="4">
    <location>
        <begin position="997"/>
        <end position="1018"/>
    </location>
</feature>
<feature type="compositionally biased region" description="Acidic residues" evidence="4">
    <location>
        <begin position="494"/>
        <end position="508"/>
    </location>
</feature>
<feature type="compositionally biased region" description="Polar residues" evidence="4">
    <location>
        <begin position="886"/>
        <end position="899"/>
    </location>
</feature>
<feature type="compositionally biased region" description="Polar residues" evidence="4">
    <location>
        <begin position="1002"/>
        <end position="1018"/>
    </location>
</feature>
<feature type="modified residue" description="Phosphoserine" evidence="6 7">
    <location>
        <position position="1107"/>
    </location>
</feature>
<feature type="modified residue" description="Phosphoserine" evidence="6 7">
    <location>
        <position position="1111"/>
    </location>
</feature>
<comment type="function">
    <text evidence="1">May be involved in transcriptional regulation.</text>
</comment>
<comment type="subcellular location">
    <subcellularLocation>
        <location evidence="5">Nucleus</location>
    </subcellularLocation>
</comment>
<comment type="similarity">
    <text evidence="5">Belongs to the krueppel C2H2-type zinc-finger protein family.</text>
</comment>
<comment type="sequence caution" evidence="5">
    <conflict type="erroneous initiation">
        <sequence resource="EMBL-CDS" id="AAH27760"/>
    </conflict>
    <text>Extended N-terminus.</text>
</comment>
<comment type="sequence caution" evidence="5">
    <conflict type="erroneous initiation">
        <sequence resource="EMBL-CDS" id="AAH68018"/>
    </conflict>
    <text>Truncated N-terminus.</text>
</comment>
<comment type="sequence caution" evidence="5">
    <conflict type="erroneous initiation">
        <sequence resource="EMBL-CDS" id="BAB24088"/>
    </conflict>
    <text>Truncated N-terminus.</text>
</comment>